<sequence>MPLLHRTIIFLQLLGTISSNYNAFFAIMVTNPTVVQQVNQIEVNLTQSNPQFVKFVHNISHLHIKLNTVELNETRLPIVQKFLKELPKAMCNVSYSIPALFEGTAVMANTTLYGKVNPMSSSVISSVHQKIFSLLNNTEIPSVDVHDIFHPRMNIVELDNRKHEDLLQIMSNRTGDFKLNTGDFIKEIVLFNSTESGSFHEEIGRAVLAPCSNFTLLRFKKPELISNRVPIFPLEMDFK</sequence>
<proteinExistence type="evidence at protein level"/>
<name>YE16_CAEEL</name>
<keyword id="KW-0025">Alternative splicing</keyword>
<keyword id="KW-0325">Glycoprotein</keyword>
<keyword id="KW-1185">Reference proteome</keyword>
<keyword id="KW-0964">Secreted</keyword>
<keyword id="KW-0732">Signal</keyword>
<comment type="subcellular location">
    <subcellularLocation>
        <location evidence="4">Secreted</location>
    </subcellularLocation>
</comment>
<comment type="alternative products">
    <event type="alternative splicing"/>
    <isoform>
        <id>Q18474-1</id>
        <name>a</name>
        <sequence type="displayed"/>
    </isoform>
    <isoform>
        <id>Q18474-2</id>
        <name>b</name>
        <sequence type="described" ref="VSP_020301"/>
    </isoform>
</comment>
<gene>
    <name type="ORF">C35A5.6</name>
</gene>
<reference key="1">
    <citation type="journal article" date="1998" name="Science">
        <title>Genome sequence of the nematode C. elegans: a platform for investigating biology.</title>
        <authorList>
            <consortium name="The C. elegans sequencing consortium"/>
        </authorList>
    </citation>
    <scope>NUCLEOTIDE SEQUENCE [LARGE SCALE GENOMIC DNA]</scope>
    <scope>ALTERNATIVE SPLICING</scope>
    <source>
        <strain>Bristol N2</strain>
    </source>
</reference>
<reference key="2">
    <citation type="journal article" date="2003" name="Nat. Biotechnol.">
        <title>Lectin affinity capture, isotope-coded tagging and mass spectrometry to identify N-linked glycoproteins.</title>
        <authorList>
            <person name="Kaji H."/>
            <person name="Saito H."/>
            <person name="Yamauchi Y."/>
            <person name="Shinkawa T."/>
            <person name="Taoka M."/>
            <person name="Hirabayashi J."/>
            <person name="Kasai K."/>
            <person name="Takahashi N."/>
            <person name="Isobe T."/>
        </authorList>
    </citation>
    <scope>GLYCOSYLATION [LARGE SCALE ANALYSIS] AT ASN-58</scope>
    <scope>IDENTIFICATION BY MASS SPECTROMETRY</scope>
    <source>
        <strain>Bristol N2</strain>
    </source>
</reference>
<reference key="3">
    <citation type="journal article" date="2007" name="Mol. Cell. Proteomics">
        <title>Proteomics reveals N-linked glycoprotein diversity in Caenorhabditis elegans and suggests an atypical translocation mechanism for integral membrane proteins.</title>
        <authorList>
            <person name="Kaji H."/>
            <person name="Kamiie J."/>
            <person name="Kawakami H."/>
            <person name="Kido K."/>
            <person name="Yamauchi Y."/>
            <person name="Shinkawa T."/>
            <person name="Taoka M."/>
            <person name="Takahashi N."/>
            <person name="Isobe T."/>
        </authorList>
    </citation>
    <scope>GLYCOSYLATION [LARGE SCALE ANALYSIS] AT ASN-58; ASN-72; ASN-92; ASN-109; ASN-136; ASN-172 AND ASN-192</scope>
    <scope>IDENTIFICATION BY MASS SPECTROMETRY</scope>
    <source>
        <strain>Bristol N2</strain>
    </source>
</reference>
<accession>Q18474</accession>
<accession>Q1NZ25</accession>
<protein>
    <recommendedName>
        <fullName>Uncharacterized protein C35A5.6</fullName>
    </recommendedName>
</protein>
<feature type="signal peptide" evidence="1">
    <location>
        <begin position="1"/>
        <end position="19"/>
    </location>
</feature>
<feature type="chain" id="PRO_0000248539" description="Uncharacterized protein C35A5.6">
    <location>
        <begin position="20"/>
        <end position="239"/>
    </location>
</feature>
<feature type="glycosylation site" description="N-linked (GlcNAc...) asparagine" evidence="1">
    <location>
        <position position="44"/>
    </location>
</feature>
<feature type="glycosylation site" description="N-linked (GlcNAc...) asparagine" evidence="2 3">
    <location>
        <position position="58"/>
    </location>
</feature>
<feature type="glycosylation site" description="N-linked (GlcNAc...) asparagine" evidence="3">
    <location>
        <position position="72"/>
    </location>
</feature>
<feature type="glycosylation site" description="N-linked (GlcNAc...) asparagine" evidence="3">
    <location>
        <position position="92"/>
    </location>
</feature>
<feature type="glycosylation site" description="N-linked (GlcNAc...) asparagine" evidence="3">
    <location>
        <position position="109"/>
    </location>
</feature>
<feature type="glycosylation site" description="N-linked (GlcNAc...) asparagine" evidence="3">
    <location>
        <position position="136"/>
    </location>
</feature>
<feature type="glycosylation site" description="N-linked (GlcNAc...) asparagine" evidence="3">
    <location>
        <position position="172"/>
    </location>
</feature>
<feature type="glycosylation site" description="N-linked (GlcNAc...) asparagine" evidence="3">
    <location>
        <position position="192"/>
    </location>
</feature>
<feature type="glycosylation site" description="N-linked (GlcNAc...) asparagine" evidence="1">
    <location>
        <position position="213"/>
    </location>
</feature>
<feature type="splice variant" id="VSP_020301" description="In isoform b." evidence="4">
    <location>
        <begin position="1"/>
        <end position="89"/>
    </location>
</feature>
<dbReference type="EMBL" id="Z71185">
    <property type="protein sequence ID" value="CAA94908.2"/>
    <property type="molecule type" value="Genomic_DNA"/>
</dbReference>
<dbReference type="EMBL" id="Z71185">
    <property type="protein sequence ID" value="CAJ90507.1"/>
    <property type="molecule type" value="Genomic_DNA"/>
</dbReference>
<dbReference type="PIR" id="T19742">
    <property type="entry name" value="T19742"/>
</dbReference>
<dbReference type="RefSeq" id="NP_001041094.2">
    <molecule id="Q18474-1"/>
    <property type="nucleotide sequence ID" value="NM_001047629.5"/>
</dbReference>
<dbReference type="RefSeq" id="NP_001041095.1">
    <molecule id="Q18474-2"/>
    <property type="nucleotide sequence ID" value="NM_001047630.3"/>
</dbReference>
<dbReference type="SMR" id="Q18474"/>
<dbReference type="BioGRID" id="48055">
    <property type="interactions" value="1"/>
</dbReference>
<dbReference type="IntAct" id="Q18474">
    <property type="interactions" value="1"/>
</dbReference>
<dbReference type="MINT" id="Q18474"/>
<dbReference type="STRING" id="6239.C35A5.6a.1"/>
<dbReference type="iPTMnet" id="Q18474"/>
<dbReference type="PaxDb" id="6239-C35A5.6a"/>
<dbReference type="PeptideAtlas" id="Q18474"/>
<dbReference type="EnsemblMetazoa" id="C35A5.6a.1">
    <molecule id="Q18474-1"/>
    <property type="protein sequence ID" value="C35A5.6a.1"/>
    <property type="gene ID" value="WBGene00007950"/>
</dbReference>
<dbReference type="EnsemblMetazoa" id="C35A5.6b.1">
    <molecule id="Q18474-2"/>
    <property type="protein sequence ID" value="C35A5.6b.1"/>
    <property type="gene ID" value="WBGene00007950"/>
</dbReference>
<dbReference type="GeneID" id="183224"/>
<dbReference type="KEGG" id="cel:CELE_C35A5.6"/>
<dbReference type="UCSC" id="C35A5.6a">
    <molecule id="Q18474-1"/>
    <property type="organism name" value="c. elegans"/>
</dbReference>
<dbReference type="AGR" id="WB:WBGene00007950"/>
<dbReference type="CTD" id="183224"/>
<dbReference type="WormBase" id="C35A5.6a">
    <molecule id="Q18474-1"/>
    <property type="protein sequence ID" value="CE42984"/>
    <property type="gene ID" value="WBGene00007950"/>
</dbReference>
<dbReference type="WormBase" id="C35A5.6b">
    <molecule id="Q18474-2"/>
    <property type="protein sequence ID" value="CE40026"/>
    <property type="gene ID" value="WBGene00007950"/>
</dbReference>
<dbReference type="eggNOG" id="ENOG502TFKD">
    <property type="taxonomic scope" value="Eukaryota"/>
</dbReference>
<dbReference type="HOGENOM" id="CLU_1200750_0_0_1"/>
<dbReference type="InParanoid" id="Q18474"/>
<dbReference type="OMA" id="KAMCNVS"/>
<dbReference type="OrthoDB" id="5798459at2759"/>
<dbReference type="PRO" id="PR:Q18474"/>
<dbReference type="Proteomes" id="UP000001940">
    <property type="component" value="Chromosome V"/>
</dbReference>
<dbReference type="Bgee" id="WBGene00007950">
    <property type="expression patterns" value="Expressed in larva and 3 other cell types or tissues"/>
</dbReference>
<dbReference type="GO" id="GO:0005576">
    <property type="term" value="C:extracellular region"/>
    <property type="evidence" value="ECO:0007669"/>
    <property type="project" value="UniProtKB-SubCell"/>
</dbReference>
<dbReference type="Gene3D" id="3.90.1140.10">
    <property type="entry name" value="Cyclic phosphodiesterase"/>
    <property type="match status" value="1"/>
</dbReference>
<dbReference type="InterPro" id="IPR019510">
    <property type="entry name" value="AKAP7-like_phosphoesterase"/>
</dbReference>
<dbReference type="Pfam" id="PF10469">
    <property type="entry name" value="AKAP7_NLS"/>
    <property type="match status" value="1"/>
</dbReference>
<organism>
    <name type="scientific">Caenorhabditis elegans</name>
    <dbReference type="NCBI Taxonomy" id="6239"/>
    <lineage>
        <taxon>Eukaryota</taxon>
        <taxon>Metazoa</taxon>
        <taxon>Ecdysozoa</taxon>
        <taxon>Nematoda</taxon>
        <taxon>Chromadorea</taxon>
        <taxon>Rhabditida</taxon>
        <taxon>Rhabditina</taxon>
        <taxon>Rhabditomorpha</taxon>
        <taxon>Rhabditoidea</taxon>
        <taxon>Rhabditidae</taxon>
        <taxon>Peloderinae</taxon>
        <taxon>Caenorhabditis</taxon>
    </lineage>
</organism>
<evidence type="ECO:0000255" key="1"/>
<evidence type="ECO:0000269" key="2">
    <source>
    </source>
</evidence>
<evidence type="ECO:0000269" key="3">
    <source>
    </source>
</evidence>
<evidence type="ECO:0000305" key="4"/>